<protein>
    <recommendedName>
        <fullName>Exocyst complex component 6B</fullName>
    </recommendedName>
    <alternativeName>
        <fullName>Exocyst complex component Sec15B</fullName>
    </alternativeName>
    <alternativeName>
        <fullName>SEC15-like protein 2</fullName>
    </alternativeName>
</protein>
<comment type="function">
    <text>Component of the exocyst complex involved in the docking of exocytic vesicles with fusion sites on the plasma membrane.</text>
</comment>
<comment type="subunit">
    <text>The exocyst complex is composed of SEC3, SEC5, SEC6, SEC8, SEC10, SEC15, EXO70 and EXO84.</text>
</comment>
<comment type="interaction">
    <interactant intactId="EBI-2690026">
        <id>Q9Y2D4</id>
    </interactant>
    <interactant intactId="EBI-949824">
        <id>O00471</id>
        <label>EXOC5</label>
    </interactant>
    <organismsDiffer>false</organismsDiffer>
    <experiments>7</experiments>
</comment>
<comment type="interaction">
    <interactant intactId="EBI-2690026">
        <id>Q9Y2D4</id>
    </interactant>
    <interactant intactId="EBI-12097232">
        <id>A0MZ66-4</id>
        <label>SHTN1</label>
    </interactant>
    <organismsDiffer>false</organismsDiffer>
    <experiments>3</experiments>
</comment>
<comment type="alternative products">
    <event type="alternative splicing"/>
    <isoform>
        <id>Q9Y2D4-1</id>
        <name>1</name>
        <sequence type="displayed"/>
    </isoform>
    <isoform>
        <id>Q9Y2D4-2</id>
        <name>2</name>
        <sequence type="described" ref="VSP_040838 VSP_040839"/>
    </isoform>
</comment>
<comment type="disease" evidence="3 4">
    <disease id="DI-05541">
        <name>Spondyloepimetaphyseal dysplasia with joint laxity, 3</name>
        <acronym>SEMDJL3</acronym>
        <description>An autosomal recessive bone disease characterized by multiple joint dislocations at birth, severe joint laxity, scoliosis, gracile metacarpals and metatarsals, delayed bone age and poorly ossified carpal and tarsal bones.</description>
        <dbReference type="MIM" id="618395"/>
    </disease>
    <text>The disease may be caused by variants affecting the gene represented in this entry.</text>
</comment>
<comment type="similarity">
    <text evidence="6">Belongs to the SEC15 family.</text>
</comment>
<comment type="sequence caution" evidence="6">
    <conflict type="erroneous initiation">
        <sequence resource="EMBL-CDS" id="BAA76763"/>
    </conflict>
    <text>Extended N-terminus.</text>
</comment>
<proteinExistence type="evidence at protein level"/>
<keyword id="KW-0025">Alternative splicing</keyword>
<keyword id="KW-0175">Coiled coil</keyword>
<keyword id="KW-0225">Disease variant</keyword>
<keyword id="KW-0242">Dwarfism</keyword>
<keyword id="KW-0268">Exocytosis</keyword>
<keyword id="KW-0653">Protein transport</keyword>
<keyword id="KW-1267">Proteomics identification</keyword>
<keyword id="KW-1185">Reference proteome</keyword>
<keyword id="KW-0813">Transport</keyword>
<evidence type="ECO:0000255" key="1"/>
<evidence type="ECO:0000256" key="2">
    <source>
        <dbReference type="SAM" id="MobiDB-lite"/>
    </source>
</evidence>
<evidence type="ECO:0000269" key="3">
    <source>
    </source>
</evidence>
<evidence type="ECO:0000269" key="4">
    <source>
    </source>
</evidence>
<evidence type="ECO:0000303" key="5">
    <source>
    </source>
</evidence>
<evidence type="ECO:0000305" key="6"/>
<reference key="1">
    <citation type="journal article" date="1999" name="DNA Res.">
        <title>Prediction of the coding sequences of unidentified human genes. XIII. The complete sequences of 100 new cDNA clones from brain which code for large proteins in vitro.</title>
        <authorList>
            <person name="Nagase T."/>
            <person name="Ishikawa K."/>
            <person name="Suyama M."/>
            <person name="Kikuno R."/>
            <person name="Hirosawa M."/>
            <person name="Miyajima N."/>
            <person name="Tanaka A."/>
            <person name="Kotani H."/>
            <person name="Nomura N."/>
            <person name="Ohara O."/>
        </authorList>
    </citation>
    <scope>NUCLEOTIDE SEQUENCE [LARGE SCALE MRNA] (ISOFORM 2)</scope>
    <source>
        <tissue>Brain</tissue>
    </source>
</reference>
<reference key="2">
    <citation type="journal article" date="2005" name="Nature">
        <title>Generation and annotation of the DNA sequences of human chromosomes 2 and 4.</title>
        <authorList>
            <person name="Hillier L.W."/>
            <person name="Graves T.A."/>
            <person name="Fulton R.S."/>
            <person name="Fulton L.A."/>
            <person name="Pepin K.H."/>
            <person name="Minx P."/>
            <person name="Wagner-McPherson C."/>
            <person name="Layman D."/>
            <person name="Wylie K."/>
            <person name="Sekhon M."/>
            <person name="Becker M.C."/>
            <person name="Fewell G.A."/>
            <person name="Delehaunty K.D."/>
            <person name="Miner T.L."/>
            <person name="Nash W.E."/>
            <person name="Kremitzki C."/>
            <person name="Oddy L."/>
            <person name="Du H."/>
            <person name="Sun H."/>
            <person name="Bradshaw-Cordum H."/>
            <person name="Ali J."/>
            <person name="Carter J."/>
            <person name="Cordes M."/>
            <person name="Harris A."/>
            <person name="Isak A."/>
            <person name="van Brunt A."/>
            <person name="Nguyen C."/>
            <person name="Du F."/>
            <person name="Courtney L."/>
            <person name="Kalicki J."/>
            <person name="Ozersky P."/>
            <person name="Abbott S."/>
            <person name="Armstrong J."/>
            <person name="Belter E.A."/>
            <person name="Caruso L."/>
            <person name="Cedroni M."/>
            <person name="Cotton M."/>
            <person name="Davidson T."/>
            <person name="Desai A."/>
            <person name="Elliott G."/>
            <person name="Erb T."/>
            <person name="Fronick C."/>
            <person name="Gaige T."/>
            <person name="Haakenson W."/>
            <person name="Haglund K."/>
            <person name="Holmes A."/>
            <person name="Harkins R."/>
            <person name="Kim K."/>
            <person name="Kruchowski S.S."/>
            <person name="Strong C.M."/>
            <person name="Grewal N."/>
            <person name="Goyea E."/>
            <person name="Hou S."/>
            <person name="Levy A."/>
            <person name="Martinka S."/>
            <person name="Mead K."/>
            <person name="McLellan M.D."/>
            <person name="Meyer R."/>
            <person name="Randall-Maher J."/>
            <person name="Tomlinson C."/>
            <person name="Dauphin-Kohlberg S."/>
            <person name="Kozlowicz-Reilly A."/>
            <person name="Shah N."/>
            <person name="Swearengen-Shahid S."/>
            <person name="Snider J."/>
            <person name="Strong J.T."/>
            <person name="Thompson J."/>
            <person name="Yoakum M."/>
            <person name="Leonard S."/>
            <person name="Pearman C."/>
            <person name="Trani L."/>
            <person name="Radionenko M."/>
            <person name="Waligorski J.E."/>
            <person name="Wang C."/>
            <person name="Rock S.M."/>
            <person name="Tin-Wollam A.-M."/>
            <person name="Maupin R."/>
            <person name="Latreille P."/>
            <person name="Wendl M.C."/>
            <person name="Yang S.-P."/>
            <person name="Pohl C."/>
            <person name="Wallis J.W."/>
            <person name="Spieth J."/>
            <person name="Bieri T.A."/>
            <person name="Berkowicz N."/>
            <person name="Nelson J.O."/>
            <person name="Osborne J."/>
            <person name="Ding L."/>
            <person name="Meyer R."/>
            <person name="Sabo A."/>
            <person name="Shotland Y."/>
            <person name="Sinha P."/>
            <person name="Wohldmann P.E."/>
            <person name="Cook L.L."/>
            <person name="Hickenbotham M.T."/>
            <person name="Eldred J."/>
            <person name="Williams D."/>
            <person name="Jones T.A."/>
            <person name="She X."/>
            <person name="Ciccarelli F.D."/>
            <person name="Izaurralde E."/>
            <person name="Taylor J."/>
            <person name="Schmutz J."/>
            <person name="Myers R.M."/>
            <person name="Cox D.R."/>
            <person name="Huang X."/>
            <person name="McPherson J.D."/>
            <person name="Mardis E.R."/>
            <person name="Clifton S.W."/>
            <person name="Warren W.C."/>
            <person name="Chinwalla A.T."/>
            <person name="Eddy S.R."/>
            <person name="Marra M.A."/>
            <person name="Ovcharenko I."/>
            <person name="Furey T.S."/>
            <person name="Miller W."/>
            <person name="Eichler E.E."/>
            <person name="Bork P."/>
            <person name="Suyama M."/>
            <person name="Torrents D."/>
            <person name="Waterston R.H."/>
            <person name="Wilson R.K."/>
        </authorList>
    </citation>
    <scope>NUCLEOTIDE SEQUENCE [LARGE SCALE GENOMIC DNA]</scope>
</reference>
<reference key="3">
    <citation type="journal article" date="2004" name="Genome Res.">
        <title>The status, quality, and expansion of the NIH full-length cDNA project: the Mammalian Gene Collection (MGC).</title>
        <authorList>
            <consortium name="The MGC Project Team"/>
        </authorList>
    </citation>
    <scope>NUCLEOTIDE SEQUENCE [LARGE SCALE MRNA] (ISOFORM 1)</scope>
</reference>
<reference key="4">
    <citation type="journal article" date="2001" name="J. Biol. Chem.">
        <title>The brain exocyst complex interacts with RalA in a GTP-dependent manner: identification of a novel mammalian Sec3 gene and a second Sec15 gene.</title>
        <authorList>
            <person name="Brymora A."/>
            <person name="Valova V.A."/>
            <person name="Larsen M.R."/>
            <person name="Roufogalis B.D."/>
            <person name="Robinson P.J."/>
        </authorList>
    </citation>
    <scope>IDENTIFICATION AS EXOC6B</scope>
</reference>
<reference key="5">
    <citation type="journal article" date="2011" name="BMC Syst. Biol.">
        <title>Initial characterization of the human central proteome.</title>
        <authorList>
            <person name="Burkard T.R."/>
            <person name="Planyavsky M."/>
            <person name="Kaupe I."/>
            <person name="Breitwieser F.P."/>
            <person name="Buerckstuemmer T."/>
            <person name="Bennett K.L."/>
            <person name="Superti-Furga G."/>
            <person name="Colinge J."/>
        </authorList>
    </citation>
    <scope>IDENTIFICATION BY MASS SPECTROMETRY [LARGE SCALE ANALYSIS]</scope>
</reference>
<reference key="6">
    <citation type="journal article" date="2016" name="Eur. J. Hum. Genet.">
        <title>A novel multiple joint dislocation syndrome associated with a homozygous nonsense variant in the EXOC6B gene.</title>
        <authorList>
            <person name="Girisha K.M."/>
            <person name="Kortuem F."/>
            <person name="Shah H."/>
            <person name="Alawi M."/>
            <person name="Dalal A."/>
            <person name="Bhavani G.S."/>
            <person name="Kutsche K."/>
        </authorList>
    </citation>
    <scope>INVOLVEMENT IN SEMDJL3</scope>
    <scope>VARIANT SEMDJL3 302-TYR--SER-811 DEL</scope>
</reference>
<reference key="7">
    <citation type="journal article" date="2018" name="Am. J. Med. Genet. A">
        <title>Confirmation of spondylo-epi-metaphyseal dysplasia with joint laxity, EXOC6B type.</title>
        <authorList>
            <person name="Campos-Xavier B."/>
            <person name="Rogers R.C."/>
            <person name="Niel-Buetschi F."/>
            <person name="Ferreira C."/>
            <person name="Unger S."/>
            <person name="Spranger J."/>
            <person name="Superti-Furga A."/>
        </authorList>
    </citation>
    <scope>INVOLVEMENT IN SEMDJL3</scope>
</reference>
<feature type="chain" id="PRO_0000118954" description="Exocyst complex component 6B">
    <location>
        <begin position="1"/>
        <end position="811"/>
    </location>
</feature>
<feature type="region of interest" description="Disordered" evidence="2">
    <location>
        <begin position="260"/>
        <end position="280"/>
    </location>
</feature>
<feature type="coiled-coil region" evidence="1">
    <location>
        <begin position="50"/>
        <end position="119"/>
    </location>
</feature>
<feature type="splice variant" id="VSP_040838" description="In isoform 2." evidence="5">
    <original>GKVAQTACMSAC</original>
    <variation>VSGSCSYFVLYI</variation>
    <location>
        <begin position="661"/>
        <end position="672"/>
    </location>
</feature>
<feature type="splice variant" id="VSP_040839" description="In isoform 2." evidence="5">
    <location>
        <begin position="673"/>
        <end position="811"/>
    </location>
</feature>
<feature type="sequence variant" id="VAR_082175" description="In SEMDJL3; uncertain significance." evidence="3">
    <location>
        <begin position="302"/>
        <end position="811"/>
    </location>
</feature>
<accession>Q9Y2D4</accession>
<accession>B8ZZY3</accession>
<name>EXC6B_HUMAN</name>
<sequence length="811" mass="94201">MERGKMAEAESLETAAEHERILREIESTDTACIGPTLRSVYDGEEHGRFMEKLETRIRNHDREIEKMCNFHYQGFVDSITELLKVRGEAQKLKNQVTDTNRKLQHEGKELVIAMEELKQCRLQQRNISATVDKLMLCLPVLEMYSKLRDQMKTKRHYPALKTLEHLEHTYLPQVSHYRFCKVMVDNIPKLREEIKDVSMSDLKDFLESIRKHSDKIGETAMKQAQQQRNLDNIVLQQPRIGSKRKSKKDAYIIFDTEIESTSPKSEQDSGILDVEDEEDDEEVPGAQDLVDFSPVYRCLHIYSVLGARETFENYYRKQRRKQARLVLQPPSNMHETLDGYRKYFNQIVGFFVVEDHILHTTQGLVNRAYIDELWEMALSKTIAALRTHSSYCSDPNLVLDLKNLIVLFADTLQVYGFPVNQLFDMLLEIRDQYSETLLKKWAGIFRNILDSDNYSPIPVTSEEMYKKVVGQFPFQDIELEKQPFPKKFPFSEFVPKVYNQIKEFIYACLKFSEDLHLSSTEVDDMIRKSTNLLLTRTLSNSLQNVIKRKNIGLTELVQIIINTTHLEKSCKYLEEFITNITNVLPETVHTTKLYGTTTFKDARHAAEEEIYTNLNQKIDQFLQLADYDWMTGDLGNKASDYLVDLIAFLRSTFAVFTHLPGKVAQTACMSACKHLATSLMQLLLEAEVRQLTLGALQQFNLDVRECEQFARSGPVPGFQEDTLQLAFIDLRQLLDLFIQWDWSTYLADYGQPNCKYLRVNPVTALTLLEKMKDTSRKNNMFAQFRKNERDKQKLIDTVAKQLRGLISSHHS</sequence>
<organism>
    <name type="scientific">Homo sapiens</name>
    <name type="common">Human</name>
    <dbReference type="NCBI Taxonomy" id="9606"/>
    <lineage>
        <taxon>Eukaryota</taxon>
        <taxon>Metazoa</taxon>
        <taxon>Chordata</taxon>
        <taxon>Craniata</taxon>
        <taxon>Vertebrata</taxon>
        <taxon>Euteleostomi</taxon>
        <taxon>Mammalia</taxon>
        <taxon>Eutheria</taxon>
        <taxon>Euarchontoglires</taxon>
        <taxon>Primates</taxon>
        <taxon>Haplorrhini</taxon>
        <taxon>Catarrhini</taxon>
        <taxon>Hominidae</taxon>
        <taxon>Homo</taxon>
    </lineage>
</organism>
<dbReference type="EMBL" id="AB023136">
    <property type="protein sequence ID" value="BAA76763.1"/>
    <property type="status" value="ALT_INIT"/>
    <property type="molecule type" value="mRNA"/>
</dbReference>
<dbReference type="EMBL" id="AC006461">
    <property type="status" value="NOT_ANNOTATED_CDS"/>
    <property type="molecule type" value="Genomic_DNA"/>
</dbReference>
<dbReference type="EMBL" id="AC016770">
    <property type="status" value="NOT_ANNOTATED_CDS"/>
    <property type="molecule type" value="Genomic_DNA"/>
</dbReference>
<dbReference type="EMBL" id="AC092630">
    <property type="status" value="NOT_ANNOTATED_CDS"/>
    <property type="molecule type" value="Genomic_DNA"/>
</dbReference>
<dbReference type="EMBL" id="AC104309">
    <property type="status" value="NOT_ANNOTATED_CDS"/>
    <property type="molecule type" value="Genomic_DNA"/>
</dbReference>
<dbReference type="EMBL" id="AC105051">
    <property type="status" value="NOT_ANNOTATED_CDS"/>
    <property type="molecule type" value="Genomic_DNA"/>
</dbReference>
<dbReference type="EMBL" id="BC160001">
    <property type="status" value="NOT_ANNOTATED_CDS"/>
    <property type="molecule type" value="mRNA"/>
</dbReference>
<dbReference type="CCDS" id="CCDS46333.1">
    <molecule id="Q9Y2D4-1"/>
</dbReference>
<dbReference type="RefSeq" id="NP_056004.1">
    <molecule id="Q9Y2D4-1"/>
    <property type="nucleotide sequence ID" value="NM_015189.3"/>
</dbReference>
<dbReference type="SMR" id="Q9Y2D4"/>
<dbReference type="BioGRID" id="116838">
    <property type="interactions" value="48"/>
</dbReference>
<dbReference type="ComplexPortal" id="CPX-4944">
    <property type="entry name" value="Exocyst, EXOC6B variant"/>
</dbReference>
<dbReference type="FunCoup" id="Q9Y2D4">
    <property type="interactions" value="882"/>
</dbReference>
<dbReference type="IntAct" id="Q9Y2D4">
    <property type="interactions" value="26"/>
</dbReference>
<dbReference type="STRING" id="9606.ENSP00000489442"/>
<dbReference type="iPTMnet" id="Q9Y2D4"/>
<dbReference type="PhosphoSitePlus" id="Q9Y2D4"/>
<dbReference type="BioMuta" id="EXOC6B"/>
<dbReference type="DMDM" id="327478583"/>
<dbReference type="jPOST" id="Q9Y2D4"/>
<dbReference type="MassIVE" id="Q9Y2D4"/>
<dbReference type="PaxDb" id="9606-ENSP00000272427"/>
<dbReference type="PeptideAtlas" id="Q9Y2D4"/>
<dbReference type="ProteomicsDB" id="85736">
    <molecule id="Q9Y2D4-1"/>
</dbReference>
<dbReference type="ProteomicsDB" id="85737">
    <molecule id="Q9Y2D4-2"/>
</dbReference>
<dbReference type="Pumba" id="Q9Y2D4"/>
<dbReference type="Antibodypedia" id="56922">
    <property type="antibodies" value="61 antibodies from 15 providers"/>
</dbReference>
<dbReference type="DNASU" id="23233"/>
<dbReference type="Ensembl" id="ENST00000272427.11">
    <molecule id="Q9Y2D4-1"/>
    <property type="protein sequence ID" value="ENSP00000272427.7"/>
    <property type="gene ID" value="ENSG00000144036.16"/>
</dbReference>
<dbReference type="GeneID" id="23233"/>
<dbReference type="KEGG" id="hsa:23233"/>
<dbReference type="MANE-Select" id="ENST00000272427.11">
    <property type="protein sequence ID" value="ENSP00000272427.7"/>
    <property type="RefSeq nucleotide sequence ID" value="NM_015189.3"/>
    <property type="RefSeq protein sequence ID" value="NP_056004.1"/>
</dbReference>
<dbReference type="UCSC" id="uc010fep.4">
    <molecule id="Q9Y2D4-1"/>
    <property type="organism name" value="human"/>
</dbReference>
<dbReference type="AGR" id="HGNC:17085"/>
<dbReference type="CTD" id="23233"/>
<dbReference type="DisGeNET" id="23233"/>
<dbReference type="GeneCards" id="EXOC6B"/>
<dbReference type="GeneReviews" id="EXOC6B"/>
<dbReference type="HGNC" id="HGNC:17085">
    <property type="gene designation" value="EXOC6B"/>
</dbReference>
<dbReference type="HPA" id="ENSG00000144036">
    <property type="expression patterns" value="Tissue enhanced (heart)"/>
</dbReference>
<dbReference type="MalaCards" id="EXOC6B"/>
<dbReference type="MIM" id="607880">
    <property type="type" value="gene"/>
</dbReference>
<dbReference type="MIM" id="618395">
    <property type="type" value="phenotype"/>
</dbReference>
<dbReference type="neXtProt" id="NX_Q9Y2D4"/>
<dbReference type="OpenTargets" id="ENSG00000144036"/>
<dbReference type="Orphanet" id="642085">
    <property type="disease" value="EXOC6B-related spondyloepimetaphyseal dysplasia with joint laxity"/>
</dbReference>
<dbReference type="PharmGKB" id="PA162385463"/>
<dbReference type="VEuPathDB" id="HostDB:ENSG00000144036"/>
<dbReference type="eggNOG" id="KOG2176">
    <property type="taxonomic scope" value="Eukaryota"/>
</dbReference>
<dbReference type="GeneTree" id="ENSGT00390000005739"/>
<dbReference type="HOGENOM" id="CLU_009437_0_0_1"/>
<dbReference type="InParanoid" id="Q9Y2D4"/>
<dbReference type="OMA" id="NAVMGIN"/>
<dbReference type="OrthoDB" id="10267033at2759"/>
<dbReference type="PAN-GO" id="Q9Y2D4">
    <property type="GO annotations" value="3 GO annotations based on evolutionary models"/>
</dbReference>
<dbReference type="PhylomeDB" id="Q9Y2D4"/>
<dbReference type="TreeFam" id="TF315199"/>
<dbReference type="PathwayCommons" id="Q9Y2D4"/>
<dbReference type="SignaLink" id="Q9Y2D4"/>
<dbReference type="SIGNOR" id="Q9Y2D4"/>
<dbReference type="BioGRID-ORCS" id="23233">
    <property type="hits" value="14 hits in 1150 CRISPR screens"/>
</dbReference>
<dbReference type="CD-CODE" id="FB4E32DD">
    <property type="entry name" value="Presynaptic clusters and postsynaptic densities"/>
</dbReference>
<dbReference type="ChiTaRS" id="EXOC6B">
    <property type="organism name" value="human"/>
</dbReference>
<dbReference type="GenomeRNAi" id="23233"/>
<dbReference type="Pharos" id="Q9Y2D4">
    <property type="development level" value="Tbio"/>
</dbReference>
<dbReference type="PRO" id="PR:Q9Y2D4"/>
<dbReference type="Proteomes" id="UP000005640">
    <property type="component" value="Chromosome 2"/>
</dbReference>
<dbReference type="RNAct" id="Q9Y2D4">
    <property type="molecule type" value="protein"/>
</dbReference>
<dbReference type="Bgee" id="ENSG00000144036">
    <property type="expression patterns" value="Expressed in calcaneal tendon and 173 other cell types or tissues"/>
</dbReference>
<dbReference type="ExpressionAtlas" id="Q9Y2D4">
    <property type="expression patterns" value="baseline and differential"/>
</dbReference>
<dbReference type="GO" id="GO:0000145">
    <property type="term" value="C:exocyst"/>
    <property type="evidence" value="ECO:0000318"/>
    <property type="project" value="GO_Central"/>
</dbReference>
<dbReference type="GO" id="GO:0006887">
    <property type="term" value="P:exocytosis"/>
    <property type="evidence" value="ECO:0000318"/>
    <property type="project" value="GO_Central"/>
</dbReference>
<dbReference type="GO" id="GO:0006893">
    <property type="term" value="P:Golgi to plasma membrane transport"/>
    <property type="evidence" value="ECO:0000318"/>
    <property type="project" value="GO_Central"/>
</dbReference>
<dbReference type="GO" id="GO:0006886">
    <property type="term" value="P:intracellular protein transport"/>
    <property type="evidence" value="ECO:0007669"/>
    <property type="project" value="InterPro"/>
</dbReference>
<dbReference type="GO" id="GO:0090148">
    <property type="term" value="P:membrane fission"/>
    <property type="evidence" value="ECO:0000303"/>
    <property type="project" value="ComplexPortal"/>
</dbReference>
<dbReference type="GO" id="GO:0000281">
    <property type="term" value="P:mitotic cytokinesis"/>
    <property type="evidence" value="ECO:0000303"/>
    <property type="project" value="ComplexPortal"/>
</dbReference>
<dbReference type="GO" id="GO:0006904">
    <property type="term" value="P:vesicle docking involved in exocytosis"/>
    <property type="evidence" value="ECO:0000303"/>
    <property type="project" value="ComplexPortal"/>
</dbReference>
<dbReference type="GO" id="GO:0090522">
    <property type="term" value="P:vesicle tethering involved in exocytosis"/>
    <property type="evidence" value="ECO:0000303"/>
    <property type="project" value="ComplexPortal"/>
</dbReference>
<dbReference type="FunFam" id="1.10.357.30:FF:000001">
    <property type="entry name" value="Exocyst complex component"/>
    <property type="match status" value="1"/>
</dbReference>
<dbReference type="FunFam" id="1.20.58.670:FF:000001">
    <property type="entry name" value="Exocyst complex component"/>
    <property type="match status" value="1"/>
</dbReference>
<dbReference type="Gene3D" id="1.20.58.670">
    <property type="entry name" value="Dsl1p vesicle tethering complex, Tip20p subunit, domain D"/>
    <property type="match status" value="1"/>
</dbReference>
<dbReference type="Gene3D" id="1.10.357.30">
    <property type="entry name" value="Exocyst complex subunit Sec15 C-terminal domain, N-terminal subdomain"/>
    <property type="match status" value="1"/>
</dbReference>
<dbReference type="InterPro" id="IPR007225">
    <property type="entry name" value="EXOC6/Sec15"/>
</dbReference>
<dbReference type="InterPro" id="IPR046361">
    <property type="entry name" value="EXOC6/Sec15_C"/>
</dbReference>
<dbReference type="InterPro" id="IPR042045">
    <property type="entry name" value="EXOC6/Sec15_C_dom1"/>
</dbReference>
<dbReference type="InterPro" id="IPR048359">
    <property type="entry name" value="EXOC6_Sec15_N"/>
</dbReference>
<dbReference type="InterPro" id="IPR042044">
    <property type="entry name" value="EXOC6PINT-1/Sec15/Tip20_C_dom2"/>
</dbReference>
<dbReference type="PANTHER" id="PTHR12702:SF3">
    <property type="entry name" value="EXOCYST COMPLEX COMPONENT 6B"/>
    <property type="match status" value="1"/>
</dbReference>
<dbReference type="PANTHER" id="PTHR12702">
    <property type="entry name" value="SEC15"/>
    <property type="match status" value="1"/>
</dbReference>
<dbReference type="Pfam" id="PF20651">
    <property type="entry name" value="EXOC6_Sec15_N"/>
    <property type="match status" value="1"/>
</dbReference>
<dbReference type="Pfam" id="PF04091">
    <property type="entry name" value="Sec15_C"/>
    <property type="match status" value="1"/>
</dbReference>
<dbReference type="PIRSF" id="PIRSF025007">
    <property type="entry name" value="Sec15"/>
    <property type="match status" value="1"/>
</dbReference>
<gene>
    <name type="primary">EXOC6B</name>
    <name type="synonym">KIAA0919</name>
    <name type="synonym">SEC15B</name>
    <name type="synonym">SEC15L2</name>
</gene>